<name>CD3E_MACFA</name>
<sequence length="198" mass="22149">MQSGTRWRVLGLCLLSIGVWGQDGNEEMGSITQTPYQVSISGTTVILTCSQHLGSEAQWQHNGKNKEDSGDRLFLPEFSEMEQSGYYVCYPRGSNPEDASHHLYLKARVCENCMEMDVMAVATIVIVDICITLGLLLLVYYWSKNRKAKAKPVTRGAGAGGRQRGQNKERPPPVPNPDYEPIRKGQQDLYSGLNQRRI</sequence>
<gene>
    <name type="primary">CD3E</name>
</gene>
<comment type="function">
    <text evidence="1 2">Part of the TCR-CD3 complex present on T-lymphocyte cell surface that plays an essential role in adaptive immune response. When antigen presenting cells (APCs) activate T-cell receptor (TCR), TCR-mediated signals are transmitted across the cell membrane by the CD3 chains CD3D, CD3E, CD3G and CD3Z. All CD3 chains contain immunoreceptor tyrosine-based activation motifs (ITAMs) in their cytoplasmic domain. Upon TCR engagement, these motifs become phosphorylated by Src family protein tyrosine kinases LCK and FYN, resulting in the activation of downstream signaling pathways. In addition of this role of signal transduction in T-cell activation, CD3E plays an essential role in correct T-cell development. Also participates in internalization and cell surface down-regulation of TCR-CD3 complexes via endocytosis sequences present in CD3E cytosolic region (By similarity). In addition to its role as a TCR coreceptor, it serves as a receptor for ITPRIPL1. Ligand recognition inhibits T-cell activation by promoting interaction with NCK1, which prevents CD3E-ZAP70 interaction and blocks the ERK-NFkB signaling cascade and calcium influx (By similarity).</text>
</comment>
<comment type="subunit">
    <text evidence="1 2">The TCR-CD3 complex is composed of a CD3D/CD3E and a CD3G/CD3E heterodimers that preferentially associate with TCRalpha and TCRbeta, respectively, to form TCRalpha/CD3E/CD3G and TCRbeta/CD3G/CD3E trimers. In turn, the hexamer interacts with CD3Z homodimer to form the TCR-CD3 complex. Alternatively, TCRalpha and TCRbeta can be replaced by TCRgamma and TCRdelta. Interacts with CD6. Interacts (via Proline-rich sequence) with NCK1; the interaction is ligand dependent but independent of tyrosine kinase activation.</text>
</comment>
<comment type="subcellular location">
    <subcellularLocation>
        <location evidence="1">Cell membrane</location>
        <topology evidence="1">Single-pass type I membrane protein</topology>
    </subcellularLocation>
</comment>
<comment type="PTM">
    <text evidence="1">Phosphorylated on Tyr residues after T-cell receptor triggering by LCK in association with CD4/CD8.</text>
</comment>
<organism>
    <name type="scientific">Macaca fascicularis</name>
    <name type="common">Crab-eating macaque</name>
    <name type="synonym">Cynomolgus monkey</name>
    <dbReference type="NCBI Taxonomy" id="9541"/>
    <lineage>
        <taxon>Eukaryota</taxon>
        <taxon>Metazoa</taxon>
        <taxon>Chordata</taxon>
        <taxon>Craniata</taxon>
        <taxon>Vertebrata</taxon>
        <taxon>Euteleostomi</taxon>
        <taxon>Mammalia</taxon>
        <taxon>Eutheria</taxon>
        <taxon>Euarchontoglires</taxon>
        <taxon>Primates</taxon>
        <taxon>Haplorrhini</taxon>
        <taxon>Catarrhini</taxon>
        <taxon>Cercopithecidae</taxon>
        <taxon>Cercopithecinae</taxon>
        <taxon>Macaca</taxon>
    </lineage>
</organism>
<accession>Q95LI5</accession>
<accession>Q95LI6</accession>
<dbReference type="EMBL" id="AB073993">
    <property type="protein sequence ID" value="BAB71849.1"/>
    <property type="molecule type" value="mRNA"/>
</dbReference>
<dbReference type="EMBL" id="AB073994">
    <property type="protein sequence ID" value="BAB71850.1"/>
    <property type="molecule type" value="mRNA"/>
</dbReference>
<dbReference type="RefSeq" id="NP_001270544.1">
    <property type="nucleotide sequence ID" value="NM_001283615.1"/>
</dbReference>
<dbReference type="RefSeq" id="XP_015290838.1">
    <property type="nucleotide sequence ID" value="XM_015435352.1"/>
</dbReference>
<dbReference type="BMRB" id="Q95LI5"/>
<dbReference type="SMR" id="Q95LI5"/>
<dbReference type="STRING" id="9541.ENSMFAP00000002547"/>
<dbReference type="ABCD" id="Q95LI5">
    <property type="antibodies" value="18 sequenced antibodies"/>
</dbReference>
<dbReference type="GeneID" id="102133065"/>
<dbReference type="KEGG" id="mcf:102133065"/>
<dbReference type="eggNOG" id="ENOG502S8KB">
    <property type="taxonomic scope" value="Eukaryota"/>
</dbReference>
<dbReference type="Proteomes" id="UP000233100">
    <property type="component" value="Unplaced"/>
</dbReference>
<dbReference type="GO" id="GO:0042105">
    <property type="term" value="C:alpha-beta T cell receptor complex"/>
    <property type="evidence" value="ECO:0007669"/>
    <property type="project" value="TreeGrafter"/>
</dbReference>
<dbReference type="GO" id="GO:0009897">
    <property type="term" value="C:external side of plasma membrane"/>
    <property type="evidence" value="ECO:0007669"/>
    <property type="project" value="TreeGrafter"/>
</dbReference>
<dbReference type="GO" id="GO:0004888">
    <property type="term" value="F:transmembrane signaling receptor activity"/>
    <property type="evidence" value="ECO:0007669"/>
    <property type="project" value="InterPro"/>
</dbReference>
<dbReference type="GO" id="GO:0002250">
    <property type="term" value="P:adaptive immune response"/>
    <property type="evidence" value="ECO:0007669"/>
    <property type="project" value="UniProtKB-KW"/>
</dbReference>
<dbReference type="GO" id="GO:0007166">
    <property type="term" value="P:cell surface receptor signaling pathway"/>
    <property type="evidence" value="ECO:0007669"/>
    <property type="project" value="InterPro"/>
</dbReference>
<dbReference type="GO" id="GO:0045059">
    <property type="term" value="P:positive thymic T cell selection"/>
    <property type="evidence" value="ECO:0007669"/>
    <property type="project" value="TreeGrafter"/>
</dbReference>
<dbReference type="FunFam" id="2.60.40.10:FF:001422">
    <property type="entry name" value="T-cell surface glycoprotein CD3 epsilon chain"/>
    <property type="match status" value="1"/>
</dbReference>
<dbReference type="Gene3D" id="2.60.40.10">
    <property type="entry name" value="Immunoglobulins"/>
    <property type="match status" value="1"/>
</dbReference>
<dbReference type="InterPro" id="IPR015484">
    <property type="entry name" value="CD3_esu/gsu/dsu"/>
</dbReference>
<dbReference type="InterPro" id="IPR036179">
    <property type="entry name" value="Ig-like_dom_sf"/>
</dbReference>
<dbReference type="InterPro" id="IPR013783">
    <property type="entry name" value="Ig-like_fold"/>
</dbReference>
<dbReference type="InterPro" id="IPR003598">
    <property type="entry name" value="Ig_sub2"/>
</dbReference>
<dbReference type="InterPro" id="IPR003110">
    <property type="entry name" value="Phos_immunorcpt_sig_ITAM"/>
</dbReference>
<dbReference type="PANTHER" id="PTHR10570:SF9">
    <property type="entry name" value="T-CELL SURFACE GLYCOPROTEIN CD3 EPSILON CHAIN"/>
    <property type="match status" value="1"/>
</dbReference>
<dbReference type="PANTHER" id="PTHR10570">
    <property type="entry name" value="T-CELL SURFACE GLYCOPROTEIN CD3 GAMMA CHAIN / DELTA CHAIN"/>
    <property type="match status" value="1"/>
</dbReference>
<dbReference type="Pfam" id="PF16681">
    <property type="entry name" value="Ig_5"/>
    <property type="match status" value="1"/>
</dbReference>
<dbReference type="Pfam" id="PF02189">
    <property type="entry name" value="ITAM"/>
    <property type="match status" value="1"/>
</dbReference>
<dbReference type="SMART" id="SM00408">
    <property type="entry name" value="IGc2"/>
    <property type="match status" value="1"/>
</dbReference>
<dbReference type="SMART" id="SM00077">
    <property type="entry name" value="ITAM"/>
    <property type="match status" value="1"/>
</dbReference>
<dbReference type="SUPFAM" id="SSF48726">
    <property type="entry name" value="Immunoglobulin"/>
    <property type="match status" value="1"/>
</dbReference>
<dbReference type="PROSITE" id="PS51055">
    <property type="entry name" value="ITAM_1"/>
    <property type="match status" value="1"/>
</dbReference>
<feature type="signal peptide" evidence="3">
    <location>
        <begin position="1"/>
        <end position="21"/>
    </location>
</feature>
<feature type="chain" id="PRO_0000014608" description="T-cell surface glycoprotein CD3 epsilon chain">
    <location>
        <begin position="22"/>
        <end position="198"/>
    </location>
</feature>
<feature type="topological domain" description="Extracellular" evidence="3">
    <location>
        <begin position="22"/>
        <end position="117"/>
    </location>
</feature>
<feature type="transmembrane region" description="Helical" evidence="3">
    <location>
        <begin position="118"/>
        <end position="138"/>
    </location>
</feature>
<feature type="topological domain" description="Cytoplasmic" evidence="3">
    <location>
        <begin position="139"/>
        <end position="198"/>
    </location>
</feature>
<feature type="domain" description="Ig-like">
    <location>
        <begin position="37"/>
        <end position="107"/>
    </location>
</feature>
<feature type="domain" description="ITAM" evidence="4">
    <location>
        <begin position="169"/>
        <end position="196"/>
    </location>
</feature>
<feature type="region of interest" description="Disordered" evidence="5">
    <location>
        <begin position="152"/>
        <end position="198"/>
    </location>
</feature>
<feature type="region of interest" description="NUMB-binding region" evidence="1">
    <location>
        <begin position="166"/>
        <end position="183"/>
    </location>
</feature>
<feature type="region of interest" description="Proline-rich sequence" evidence="1">
    <location>
        <begin position="170"/>
        <end position="177"/>
    </location>
</feature>
<feature type="compositionally biased region" description="Polar residues" evidence="5">
    <location>
        <begin position="188"/>
        <end position="198"/>
    </location>
</feature>
<feature type="modified residue" description="Phosphotyrosine" evidence="1 4">
    <location>
        <position position="179"/>
    </location>
</feature>
<feature type="modified residue" description="Phosphotyrosine" evidence="1 4">
    <location>
        <position position="190"/>
    </location>
</feature>
<feature type="disulfide bond" evidence="2">
    <location>
        <begin position="49"/>
        <end position="89"/>
    </location>
</feature>
<feature type="sequence variant" description="In allele FN18-." evidence="6">
    <original>E</original>
    <variation>G</variation>
    <location>
        <position position="67"/>
    </location>
</feature>
<feature type="sequence variant" description="In allele FN18-." evidence="6">
    <original>R</original>
    <variation>Q</variation>
    <location>
        <position position="72"/>
    </location>
</feature>
<evidence type="ECO:0000250" key="1">
    <source>
        <dbReference type="UniProtKB" id="P07766"/>
    </source>
</evidence>
<evidence type="ECO:0000250" key="2">
    <source>
        <dbReference type="UniProtKB" id="P22646"/>
    </source>
</evidence>
<evidence type="ECO:0000255" key="3"/>
<evidence type="ECO:0000255" key="4">
    <source>
        <dbReference type="PROSITE-ProRule" id="PRU00379"/>
    </source>
</evidence>
<evidence type="ECO:0000256" key="5">
    <source>
        <dbReference type="SAM" id="MobiDB-lite"/>
    </source>
</evidence>
<evidence type="ECO:0000269" key="6">
    <source>
    </source>
</evidence>
<proteinExistence type="evidence at transcript level"/>
<protein>
    <recommendedName>
        <fullName>T-cell surface glycoprotein CD3 epsilon chain</fullName>
    </recommendedName>
    <cdAntigenName>CD3e</cdAntigenName>
</protein>
<reference key="1">
    <citation type="journal article" date="2001" name="J. Med. Primatol.">
        <title>CD3 polymorphism in cynomolgus monkeys (Macaca fascicularis).</title>
        <authorList>
            <person name="Uda A."/>
            <person name="Tanabayashi K."/>
            <person name="Mukai R."/>
            <person name="Yachi M."/>
            <person name="Nam K."/>
            <person name="Yamada A."/>
        </authorList>
    </citation>
    <scope>NUCLEOTIDE SEQUENCE [MRNA]</scope>
    <scope>VARIANTS GLY-67 AND GLN-72</scope>
</reference>
<keyword id="KW-1064">Adaptive immunity</keyword>
<keyword id="KW-1003">Cell membrane</keyword>
<keyword id="KW-1015">Disulfide bond</keyword>
<keyword id="KW-0391">Immunity</keyword>
<keyword id="KW-0393">Immunoglobulin domain</keyword>
<keyword id="KW-0472">Membrane</keyword>
<keyword id="KW-0597">Phosphoprotein</keyword>
<keyword id="KW-0675">Receptor</keyword>
<keyword id="KW-1185">Reference proteome</keyword>
<keyword id="KW-0732">Signal</keyword>
<keyword id="KW-0812">Transmembrane</keyword>
<keyword id="KW-1133">Transmembrane helix</keyword>